<organism>
    <name type="scientific">Clostridium scindens (strain JCM 10418 / VPI 12708)</name>
    <dbReference type="NCBI Taxonomy" id="29347"/>
    <lineage>
        <taxon>Bacteria</taxon>
        <taxon>Bacillati</taxon>
        <taxon>Bacillota</taxon>
        <taxon>Clostridia</taxon>
        <taxon>Lachnospirales</taxon>
        <taxon>Lachnospiraceae</taxon>
    </lineage>
</organism>
<keyword id="KW-0903">Direct protein sequencing</keyword>
<keyword id="KW-0443">Lipid metabolism</keyword>
<keyword id="KW-0520">NAD</keyword>
<keyword id="KW-0560">Oxidoreductase</keyword>
<keyword id="KW-0753">Steroid metabolism</keyword>
<comment type="function">
    <text evidence="4 5">Involved in the multi-step bile acid 7alpha-dehydroxylation pathway that transforms primary bile acids to secondary bile acids in the human gut (PubMed:16299351, PubMed:23836456). Catalyzes the oxidation of C3-hydroxyl group of CoA conjugated bile acids generating a C3-oxo bile acid intermediate. Can use choloyl-CoA, chenodeoxycholoyl-CoA, deoxycholoyl-CoA, and lithocholoyl-CoA as substrates with similar efficiency. Highly prefers NAD over NADP as cosubstrate. Also catalyzes the reverse reactions; in vitro, the preferred direction of reaction depends on the pH. Has very little activity with unconjugated (non-CoA) bile acid substrates (PubMed:23836456).</text>
</comment>
<comment type="catalytic activity">
    <reaction evidence="4">
        <text>a 3alpha-hydroxy bile acid CoA + NAD(+) = a 3-oxo bile acid CoA + NADH + H(+)</text>
        <dbReference type="Rhea" id="RHEA:55380"/>
        <dbReference type="ChEBI" id="CHEBI:15378"/>
        <dbReference type="ChEBI" id="CHEBI:57540"/>
        <dbReference type="ChEBI" id="CHEBI:57945"/>
        <dbReference type="ChEBI" id="CHEBI:138842"/>
        <dbReference type="ChEBI" id="CHEBI:138843"/>
        <dbReference type="EC" id="1.1.1.395"/>
    </reaction>
</comment>
<comment type="catalytic activity">
    <reaction evidence="4">
        <text>choloyl-CoA + NAD(+) = 7alpha,12alpha-dihydroxy-3-oxochol-24-oyl-CoA + NADH + H(+)</text>
        <dbReference type="Rhea" id="RHEA:52588"/>
        <dbReference type="ChEBI" id="CHEBI:15378"/>
        <dbReference type="ChEBI" id="CHEBI:57373"/>
        <dbReference type="ChEBI" id="CHEBI:57540"/>
        <dbReference type="ChEBI" id="CHEBI:57945"/>
        <dbReference type="ChEBI" id="CHEBI:136700"/>
        <dbReference type="EC" id="1.1.1.395"/>
    </reaction>
</comment>
<comment type="catalytic activity">
    <reaction evidence="4">
        <text>chenodeoxycholoyl-CoA + NAD(+) = 7alpha-hydroxy-3-oxochol-24-oyl-CoA + NADH + H(+)</text>
        <dbReference type="Rhea" id="RHEA:52584"/>
        <dbReference type="ChEBI" id="CHEBI:15378"/>
        <dbReference type="ChEBI" id="CHEBI:57540"/>
        <dbReference type="ChEBI" id="CHEBI:57945"/>
        <dbReference type="ChEBI" id="CHEBI:62989"/>
        <dbReference type="ChEBI" id="CHEBI:136698"/>
        <dbReference type="EC" id="1.1.1.395"/>
    </reaction>
</comment>
<comment type="catalytic activity">
    <reaction evidence="4">
        <text>deoxycholoyl-CoA + NAD(+) = 12alpha-hydroxy-3-oxocholan-24-oyl-CoA + NADH + H(+)</text>
        <dbReference type="Rhea" id="RHEA:52592"/>
        <dbReference type="ChEBI" id="CHEBI:15378"/>
        <dbReference type="ChEBI" id="CHEBI:57540"/>
        <dbReference type="ChEBI" id="CHEBI:57945"/>
        <dbReference type="ChEBI" id="CHEBI:58810"/>
        <dbReference type="ChEBI" id="CHEBI:136701"/>
        <dbReference type="EC" id="1.1.1.395"/>
    </reaction>
</comment>
<comment type="catalytic activity">
    <reaction evidence="4">
        <text>lithocholoyl-CoA + NAD(+) = 3-oxocholan-24-oyl-CoA + NADH + H(+)</text>
        <dbReference type="Rhea" id="RHEA:52596"/>
        <dbReference type="ChEBI" id="CHEBI:15378"/>
        <dbReference type="ChEBI" id="CHEBI:57540"/>
        <dbReference type="ChEBI" id="CHEBI:57945"/>
        <dbReference type="ChEBI" id="CHEBI:87438"/>
        <dbReference type="ChEBI" id="CHEBI:136703"/>
        <dbReference type="EC" id="1.1.1.395"/>
    </reaction>
</comment>
<comment type="biophysicochemical properties">
    <kinetics>
        <KM evidence="4">106 uM for choloyl-CoA (at pH 8.7 and 37 degrees Celsius)</KM>
        <KM evidence="4">53 uM for chenodeoxycholoyl-CoA (at pH 8.7 and 37 degrees Celsius)</KM>
        <KM evidence="4">22 uM for lithocholoyl-CoA (at pH 8.7 and 37 degrees Celsius)</KM>
        <KM evidence="4">16 uM for deoxycholoyl-CoA (at pH 8.7 and 37 degrees Celsius)</KM>
        <KM evidence="4">9.1 uM for 3-oxocholoyl-CoA (at pH 8.7 and 37 degrees Celsius)</KM>
        <KM evidence="4">3.3 uM for 3-oxochenodeoxycholoyl-CoA (at pH 8.7 and 37 degrees Celsius)</KM>
        <KM evidence="4">8.3 uM for 3-oxolithocholoyl-CoA (at pH 8.7 and 37 degrees Celsius)</KM>
        <KM evidence="4">5.6 uM for 3-oxodeoxycholoyl-CoA (at pH 8.7 and 37 degrees Celsius)</KM>
        <KM evidence="4">17 uM for NAD(+) (at pH 8.7 and 37 degrees Celsius)</KM>
        <KM evidence="4">883 uM for NADP(+) (at pH 8.7 and 37 degrees Celsius)</KM>
        <text evidence="4">kcat is 74 min(-1) with choloyl-CoA as substrate. kcat is 49 min(-1) with chenodeoxycholoyl-CoA as substrate. kcat is 44 min(-1) with lithocholoyl-CoA as substrate. kcat is 52 min(-1) with deoxycholoyl-CoA as substrate. kcat is 33 min(-1) with 3-oxocholoyl-CoA as substrate. kcat is 24 min(-1) with 3-oxochenodeoxycholoyl-CoA as substrate. kcat is 42 min(-1) with 3-oxolithocholoyl-CoA as substrate. kcat is 44 min(-1) with 3-oxodeoxycholoyl-CoA as substrate (at pH 8.7 and 37 degrees Celsius).</text>
    </kinetics>
    <phDependence>
        <text evidence="4">The direction of reaction is pH dependent in vitro. At pH 7.3, clearly the reduction reaction is preferred with an order of magnitude higher velocity than the oxidation reaction. At pH 8.7, the velocities of the oxidation and reduction reaction are comparable. At pH 9.9 the velocity of the reduction reaction is about 60% of oxidation reaction.</text>
    </phDependence>
</comment>
<comment type="pathway">
    <text evidence="5 8">Lipid metabolism; bile acid biosynthesis.</text>
</comment>
<comment type="subunit">
    <text evidence="4">Homotetramer.</text>
</comment>
<comment type="induction">
    <text evidence="5">Induced by the C24 primary bile acids cholic acid (CA) and chenodeoxycholic acid (CDCA).</text>
</comment>
<comment type="miscellaneous">
    <text evidence="7">There are three genes for BaiA proteins: baiA1 is identical to baiA3 and encodes a polypeptide sharing 92% identity with baiA2 gene product.</text>
</comment>
<comment type="miscellaneous">
    <text evidence="8">Reaction mechanism seems to proceed via a nicotinamide-OH(-) adduct, which is proposed to be involved in proton relay instead of hydride transfer.</text>
</comment>
<comment type="similarity">
    <text evidence="7">Belongs to the short-chain dehydrogenases/reductases (SDR) family.</text>
</comment>
<comment type="caution">
    <text evidence="7">Was originally named bile acid 7-dehydroxylase (PubMed:3549693). In fact, the 7-dehydroxylation process is catalyzed by multiple enzymes.</text>
</comment>
<feature type="chain" id="PRO_0000054524" description="3alpha-hydroxy bile acid-CoA-ester 3-dehydrogenase 1/3">
    <location>
        <begin position="1"/>
        <end position="249"/>
    </location>
</feature>
<feature type="active site" description="Proton donor/acceptor" evidence="2 3">
    <location>
        <position position="157"/>
    </location>
</feature>
<feature type="active site" description="Proton donor/acceptor" evidence="2">
    <location>
        <position position="161"/>
    </location>
</feature>
<feature type="binding site" evidence="2">
    <location>
        <begin position="15"/>
        <end position="18"/>
    </location>
    <ligand>
        <name>NAD(+)</name>
        <dbReference type="ChEBI" id="CHEBI:57540"/>
    </ligand>
</feature>
<feature type="binding site" evidence="2">
    <location>
        <position position="38"/>
    </location>
    <ligand>
        <name>NAD(+)</name>
        <dbReference type="ChEBI" id="CHEBI:57540"/>
    </ligand>
</feature>
<feature type="binding site" evidence="2">
    <location>
        <position position="42"/>
    </location>
    <ligand>
        <name>NAD(+)</name>
        <dbReference type="ChEBI" id="CHEBI:57540"/>
    </ligand>
</feature>
<feature type="binding site" evidence="2">
    <location>
        <position position="92"/>
    </location>
    <ligand>
        <name>NAD(+)</name>
        <dbReference type="ChEBI" id="CHEBI:57540"/>
    </ligand>
</feature>
<feature type="binding site" evidence="1">
    <location>
        <position position="144"/>
    </location>
    <ligand>
        <name>substrate</name>
    </ligand>
</feature>
<feature type="binding site" evidence="2">
    <location>
        <position position="161"/>
    </location>
    <ligand>
        <name>NAD(+)</name>
        <dbReference type="ChEBI" id="CHEBI:57540"/>
    </ligand>
</feature>
<feature type="binding site" evidence="2">
    <location>
        <begin position="190"/>
        <end position="192"/>
    </location>
    <ligand>
        <name>NAD(+)</name>
        <dbReference type="ChEBI" id="CHEBI:57540"/>
    </ligand>
</feature>
<feature type="sequence conflict" description="In Ref. 2." evidence="7" ref="2">
    <original>TSKA</original>
    <variation>YQGG</variation>
    <location>
        <begin position="159"/>
        <end position="162"/>
    </location>
</feature>
<reference key="1">
    <citation type="journal article" date="1990" name="J. Bacteriol.">
        <title>Multiple copies of a bile acid-inducible gene in Eubacterium sp. strain VPI 12708.</title>
        <authorList>
            <person name="Gopal-Srivastava R."/>
            <person name="Mallonee D.H."/>
            <person name="White W.B."/>
            <person name="Hylemon P.B."/>
        </authorList>
    </citation>
    <scope>NUCLEOTIDE SEQUENCE [GENOMIC DNA] (BAIA3)</scope>
</reference>
<reference key="2">
    <citation type="journal article" date="1988" name="J. Bacteriol.">
        <title>Nucleotide sequence and regulation of a gene involved in bile acid 7-dehydroxylation by Eubacterium sp. strain VPI 12708.</title>
        <authorList>
            <person name="Coleman J.P."/>
            <person name="White W.B."/>
            <person name="Lijewski M."/>
            <person name="Hylemon P.B."/>
        </authorList>
    </citation>
    <scope>NUCLEOTIDE SEQUENCE [GENOMIC DNA] (BAIA1)</scope>
</reference>
<reference key="3">
    <citation type="journal article" date="1987" name="J. Bacteriol.">
        <title>Molecular cloning of bile acid 7-dehydroxylase from Eubacterium sp. strain VPI 12708.</title>
        <authorList>
            <person name="Coleman J.P."/>
            <person name="White W.B."/>
            <person name="Hylemon P.B."/>
        </authorList>
    </citation>
    <scope>NUCLEOTIDE SEQUENCE [GENOMIC DNA] OF 1-55 (BAIA1)</scope>
    <scope>PROTEIN SEQUENCE OF 1-33</scope>
</reference>
<reference key="4">
    <citation type="journal article" date="2006" name="J. Lipid Res.">
        <title>Bile salt biotransformations by human intestinal bacteria.</title>
        <authorList>
            <person name="Ridlon J.M."/>
            <person name="Kang D.J."/>
            <person name="Hylemon P.B."/>
        </authorList>
    </citation>
    <scope>REVIEW</scope>
    <scope>FUNCTION</scope>
    <scope>INDUCTION</scope>
    <scope>PATHWAY</scope>
</reference>
<reference key="5">
    <citation type="journal article" date="2014" name="Proteins">
        <title>Structural and functional characterization of BaiA, an enzyme involved in secondary bile acid synthesis in human gut microbe.</title>
        <authorList>
            <person name="Bhowmik S."/>
            <person name="Jones D.H."/>
            <person name="Chiu H.P."/>
            <person name="Park I.H."/>
            <person name="Chiu H.J."/>
            <person name="Axelrod H.L."/>
            <person name="Farr C.L."/>
            <person name="Tien H.J."/>
            <person name="Agarwalla S."/>
            <person name="Lesley S.A."/>
        </authorList>
    </citation>
    <scope>FUNCTION</scope>
    <scope>CATALYTIC ACTIVITY</scope>
    <scope>SUBSTRATE SPECIFICITY</scope>
    <scope>BIOPHYSICOCHEMICAL PROPERTIES</scope>
    <scope>SUBUNIT</scope>
    <scope>REACTION MECHANISM</scope>
    <scope>PATHWAY</scope>
    <source>
        <strain>JCM 10418 / VPI 12708</strain>
    </source>
</reference>
<protein>
    <recommendedName>
        <fullName evidence="8">3alpha-hydroxy bile acid-CoA-ester 3-dehydrogenase 1/3</fullName>
        <ecNumber evidence="4">1.1.1.395</ecNumber>
    </recommendedName>
    <alternativeName>
        <fullName evidence="5 6">3alpha-hydroxysteroid dehydrogenase 1/3</fullName>
        <shortName evidence="5">3alpha-HSDH 1/3</shortName>
    </alternativeName>
    <alternativeName>
        <fullName evidence="5">Bile acid-inducible protein BaiA1</fullName>
    </alternativeName>
    <alternativeName>
        <fullName evidence="5">Bile acid-inducible protein BaiA3</fullName>
    </alternativeName>
</protein>
<proteinExistence type="evidence at protein level"/>
<gene>
    <name type="primary">baiA1</name>
</gene>
<gene>
    <name type="primary">baiA3</name>
</gene>
<sequence>MKLVQDKITIITGGTRGIGFAAAKLFIENGAKVSIFGETQEEVDTALAQLKELYPEEEVLGFAPDLTSRDAVMAAVGTVAQKYGRLDVMINNAGITMNSVFSRVSEEDFKNIMDINVNGVFNGAWSAYQCMKDAKQGVIINTASVTGIYGSLSGIGYPTSKAGVIGLTHGLGREIIRKNIRVVGVAPGVVDTDMTKGLPPEILEDYLKTLPMKRMLKPEEIANVYLFLASDLASGITATTISVDGAYRP</sequence>
<accession>P07914</accession>
<dbReference type="EC" id="1.1.1.395" evidence="4"/>
<dbReference type="EMBL" id="M34658">
    <property type="protein sequence ID" value="AAB61155.1"/>
    <property type="molecule type" value="Genomic_DNA"/>
</dbReference>
<dbReference type="EMBL" id="M19654">
    <property type="protein sequence ID" value="AAB61154.1"/>
    <property type="molecule type" value="Genomic_DNA"/>
</dbReference>
<dbReference type="EMBL" id="M15813">
    <property type="protein sequence ID" value="AAB61153.1"/>
    <property type="molecule type" value="Genomic_DNA"/>
</dbReference>
<dbReference type="PIR" id="B37762">
    <property type="entry name" value="B37762"/>
</dbReference>
<dbReference type="RefSeq" id="WP_025644109.1">
    <property type="nucleotide sequence ID" value="NZ_CANSEQ010000022.1"/>
</dbReference>
<dbReference type="SMR" id="P07914"/>
<dbReference type="SwissLipids" id="SLP:000001732"/>
<dbReference type="BioCyc" id="MetaCyc:BAIA1EUBSP-MONOMER"/>
<dbReference type="UniPathway" id="UPA00221"/>
<dbReference type="GO" id="GO:0033792">
    <property type="term" value="F:3alpha-hydroxy bile acid-CoA-ester 3-dehydrogenase activity"/>
    <property type="evidence" value="ECO:0007669"/>
    <property type="project" value="UniProtKB-EC"/>
</dbReference>
<dbReference type="GO" id="GO:0032052">
    <property type="term" value="F:bile acid binding"/>
    <property type="evidence" value="ECO:0000314"/>
    <property type="project" value="UniProtKB"/>
</dbReference>
<dbReference type="GO" id="GO:0070403">
    <property type="term" value="F:NAD+ binding"/>
    <property type="evidence" value="ECO:0000314"/>
    <property type="project" value="UniProtKB"/>
</dbReference>
<dbReference type="GO" id="GO:0033764">
    <property type="term" value="F:steroid dehydrogenase activity, acting on the CH-OH group of donors, NAD or NADP as acceptor"/>
    <property type="evidence" value="ECO:0000314"/>
    <property type="project" value="UniProtKB"/>
</dbReference>
<dbReference type="GO" id="GO:0006699">
    <property type="term" value="P:bile acid biosynthetic process"/>
    <property type="evidence" value="ECO:0007669"/>
    <property type="project" value="UniProtKB-UniPathway"/>
</dbReference>
<dbReference type="GO" id="GO:0008206">
    <property type="term" value="P:bile acid metabolic process"/>
    <property type="evidence" value="ECO:0000314"/>
    <property type="project" value="UniProtKB"/>
</dbReference>
<dbReference type="GO" id="GO:0051289">
    <property type="term" value="P:protein homotetramerization"/>
    <property type="evidence" value="ECO:0000314"/>
    <property type="project" value="UniProtKB"/>
</dbReference>
<dbReference type="GO" id="GO:1903412">
    <property type="term" value="P:response to bile acid"/>
    <property type="evidence" value="ECO:0000304"/>
    <property type="project" value="UniProtKB"/>
</dbReference>
<dbReference type="FunFam" id="3.40.50.720:FF:001083">
    <property type="entry name" value="Bile acid 7-dehydroxylase 1/3"/>
    <property type="match status" value="1"/>
</dbReference>
<dbReference type="Gene3D" id="3.40.50.720">
    <property type="entry name" value="NAD(P)-binding Rossmann-like Domain"/>
    <property type="match status" value="1"/>
</dbReference>
<dbReference type="InterPro" id="IPR036291">
    <property type="entry name" value="NAD(P)-bd_dom_sf"/>
</dbReference>
<dbReference type="InterPro" id="IPR020904">
    <property type="entry name" value="Sc_DH/Rdtase_CS"/>
</dbReference>
<dbReference type="InterPro" id="IPR050259">
    <property type="entry name" value="SDR"/>
</dbReference>
<dbReference type="InterPro" id="IPR002347">
    <property type="entry name" value="SDR_fam"/>
</dbReference>
<dbReference type="PANTHER" id="PTHR42879">
    <property type="entry name" value="3-OXOACYL-(ACYL-CARRIER-PROTEIN) REDUCTASE"/>
    <property type="match status" value="1"/>
</dbReference>
<dbReference type="PANTHER" id="PTHR42879:SF2">
    <property type="entry name" value="3-OXOACYL-[ACYL-CARRIER-PROTEIN] REDUCTASE FABG"/>
    <property type="match status" value="1"/>
</dbReference>
<dbReference type="Pfam" id="PF00106">
    <property type="entry name" value="adh_short"/>
    <property type="match status" value="1"/>
</dbReference>
<dbReference type="PRINTS" id="PR00081">
    <property type="entry name" value="GDHRDH"/>
</dbReference>
<dbReference type="PRINTS" id="PR00080">
    <property type="entry name" value="SDRFAMILY"/>
</dbReference>
<dbReference type="SUPFAM" id="SSF51735">
    <property type="entry name" value="NAD(P)-binding Rossmann-fold domains"/>
    <property type="match status" value="1"/>
</dbReference>
<dbReference type="PROSITE" id="PS00061">
    <property type="entry name" value="ADH_SHORT"/>
    <property type="match status" value="1"/>
</dbReference>
<evidence type="ECO:0000250" key="1"/>
<evidence type="ECO:0000250" key="2">
    <source>
        <dbReference type="UniProtKB" id="P19337"/>
    </source>
</evidence>
<evidence type="ECO:0000255" key="3">
    <source>
        <dbReference type="PROSITE-ProRule" id="PRU10001"/>
    </source>
</evidence>
<evidence type="ECO:0000269" key="4">
    <source>
    </source>
</evidence>
<evidence type="ECO:0000303" key="5">
    <source>
    </source>
</evidence>
<evidence type="ECO:0000303" key="6">
    <source>
    </source>
</evidence>
<evidence type="ECO:0000305" key="7"/>
<evidence type="ECO:0000305" key="8">
    <source>
    </source>
</evidence>
<name>BAIA1_CLOSV</name>